<proteinExistence type="inferred from homology"/>
<protein>
    <recommendedName>
        <fullName evidence="1">Ribosomal RNA large subunit methyltransferase E</fullName>
        <ecNumber evidence="1">2.1.1.166</ecNumber>
    </recommendedName>
    <alternativeName>
        <fullName evidence="1">23S rRNA Um2552 methyltransferase</fullName>
    </alternativeName>
    <alternativeName>
        <fullName evidence="1">rRNA (uridine-2'-O-)-methyltransferase</fullName>
    </alternativeName>
</protein>
<evidence type="ECO:0000255" key="1">
    <source>
        <dbReference type="HAMAP-Rule" id="MF_01547"/>
    </source>
</evidence>
<dbReference type="EC" id="2.1.1.166" evidence="1"/>
<dbReference type="EMBL" id="AE007869">
    <property type="protein sequence ID" value="AAK86428.2"/>
    <property type="molecule type" value="Genomic_DNA"/>
</dbReference>
<dbReference type="PIR" id="AF2652">
    <property type="entry name" value="AF2652"/>
</dbReference>
<dbReference type="PIR" id="C97434">
    <property type="entry name" value="C97434"/>
</dbReference>
<dbReference type="RefSeq" id="NP_353643.2">
    <property type="nucleotide sequence ID" value="NC_003062.2"/>
</dbReference>
<dbReference type="RefSeq" id="WP_010971017.1">
    <property type="nucleotide sequence ID" value="NC_003062.2"/>
</dbReference>
<dbReference type="SMR" id="Q8UHR0"/>
<dbReference type="STRING" id="176299.Atu0620"/>
<dbReference type="EnsemblBacteria" id="AAK86428">
    <property type="protein sequence ID" value="AAK86428"/>
    <property type="gene ID" value="Atu0620"/>
</dbReference>
<dbReference type="GeneID" id="1132658"/>
<dbReference type="KEGG" id="atu:Atu0620"/>
<dbReference type="PATRIC" id="fig|176299.10.peg.613"/>
<dbReference type="eggNOG" id="COG0293">
    <property type="taxonomic scope" value="Bacteria"/>
</dbReference>
<dbReference type="HOGENOM" id="CLU_009422_4_0_5"/>
<dbReference type="OrthoDB" id="9790080at2"/>
<dbReference type="PhylomeDB" id="Q8UHR0"/>
<dbReference type="BioCyc" id="AGRO:ATU0620-MONOMER"/>
<dbReference type="Proteomes" id="UP000000813">
    <property type="component" value="Chromosome circular"/>
</dbReference>
<dbReference type="GO" id="GO:0005737">
    <property type="term" value="C:cytoplasm"/>
    <property type="evidence" value="ECO:0007669"/>
    <property type="project" value="UniProtKB-SubCell"/>
</dbReference>
<dbReference type="GO" id="GO:0008650">
    <property type="term" value="F:rRNA (uridine-2'-O-)-methyltransferase activity"/>
    <property type="evidence" value="ECO:0007669"/>
    <property type="project" value="UniProtKB-UniRule"/>
</dbReference>
<dbReference type="Gene3D" id="3.40.50.150">
    <property type="entry name" value="Vaccinia Virus protein VP39"/>
    <property type="match status" value="1"/>
</dbReference>
<dbReference type="HAMAP" id="MF_01547">
    <property type="entry name" value="RNA_methyltr_E"/>
    <property type="match status" value="1"/>
</dbReference>
<dbReference type="InterPro" id="IPR050082">
    <property type="entry name" value="RNA_methyltr_RlmE"/>
</dbReference>
<dbReference type="InterPro" id="IPR002877">
    <property type="entry name" value="RNA_MeTrfase_FtsJ_dom"/>
</dbReference>
<dbReference type="InterPro" id="IPR015507">
    <property type="entry name" value="rRNA-MeTfrase_E"/>
</dbReference>
<dbReference type="InterPro" id="IPR029063">
    <property type="entry name" value="SAM-dependent_MTases_sf"/>
</dbReference>
<dbReference type="PANTHER" id="PTHR10920">
    <property type="entry name" value="RIBOSOMAL RNA METHYLTRANSFERASE"/>
    <property type="match status" value="1"/>
</dbReference>
<dbReference type="PANTHER" id="PTHR10920:SF18">
    <property type="entry name" value="RRNA METHYLTRANSFERASE 2, MITOCHONDRIAL"/>
    <property type="match status" value="1"/>
</dbReference>
<dbReference type="Pfam" id="PF01728">
    <property type="entry name" value="FtsJ"/>
    <property type="match status" value="1"/>
</dbReference>
<dbReference type="PIRSF" id="PIRSF005461">
    <property type="entry name" value="23S_rRNA_mtase"/>
    <property type="match status" value="1"/>
</dbReference>
<dbReference type="SUPFAM" id="SSF53335">
    <property type="entry name" value="S-adenosyl-L-methionine-dependent methyltransferases"/>
    <property type="match status" value="1"/>
</dbReference>
<accession>Q8UHR0</accession>
<accession>Q7D133</accession>
<organism>
    <name type="scientific">Agrobacterium fabrum (strain C58 / ATCC 33970)</name>
    <name type="common">Agrobacterium tumefaciens (strain C58)</name>
    <dbReference type="NCBI Taxonomy" id="176299"/>
    <lineage>
        <taxon>Bacteria</taxon>
        <taxon>Pseudomonadati</taxon>
        <taxon>Pseudomonadota</taxon>
        <taxon>Alphaproteobacteria</taxon>
        <taxon>Hyphomicrobiales</taxon>
        <taxon>Rhizobiaceae</taxon>
        <taxon>Rhizobium/Agrobacterium group</taxon>
        <taxon>Agrobacterium</taxon>
        <taxon>Agrobacterium tumefaciens complex</taxon>
    </lineage>
</organism>
<comment type="function">
    <text evidence="1">Specifically methylates the uridine in position 2552 of 23S rRNA at the 2'-O position of the ribose in the fully assembled 50S ribosomal subunit.</text>
</comment>
<comment type="catalytic activity">
    <reaction evidence="1">
        <text>uridine(2552) in 23S rRNA + S-adenosyl-L-methionine = 2'-O-methyluridine(2552) in 23S rRNA + S-adenosyl-L-homocysteine + H(+)</text>
        <dbReference type="Rhea" id="RHEA:42720"/>
        <dbReference type="Rhea" id="RHEA-COMP:10202"/>
        <dbReference type="Rhea" id="RHEA-COMP:10203"/>
        <dbReference type="ChEBI" id="CHEBI:15378"/>
        <dbReference type="ChEBI" id="CHEBI:57856"/>
        <dbReference type="ChEBI" id="CHEBI:59789"/>
        <dbReference type="ChEBI" id="CHEBI:65315"/>
        <dbReference type="ChEBI" id="CHEBI:74478"/>
        <dbReference type="EC" id="2.1.1.166"/>
    </reaction>
</comment>
<comment type="subcellular location">
    <subcellularLocation>
        <location evidence="1">Cytoplasm</location>
    </subcellularLocation>
</comment>
<comment type="similarity">
    <text evidence="1">Belongs to the class I-like SAM-binding methyltransferase superfamily. RNA methyltransferase RlmE family.</text>
</comment>
<sequence>MSKAPTSTNRTGRKIGQKVKKTKLKASSRRWLERHINDPYVQRAKLEGYRARAAFKLLEINDKHQILKGATRIIDLGAAPGSWSQIASKVTDSTEDDIRVAAIDFLEIDPIPGVKILQLDFLDPTAPDQLMEAVGGTPDLVLSDMAAPTTGHQKTDHIRTMHLCEVAADFAVQVLAEGGHFLAKTFQGGTEKALLDMLKKNFKQVLHIKPASSRSESVEMFLLAKHFKGRRHEPAIDADAEESTED</sequence>
<name>RLME_AGRFC</name>
<gene>
    <name evidence="1" type="primary">rlmE</name>
    <name evidence="1" type="synonym">ftsJ</name>
    <name evidence="1" type="synonym">rrmJ</name>
    <name type="ordered locus">Atu0620</name>
    <name type="ORF">AGR_C_1101</name>
</gene>
<feature type="chain" id="PRO_0000155464" description="Ribosomal RNA large subunit methyltransferase E">
    <location>
        <begin position="1"/>
        <end position="246"/>
    </location>
</feature>
<feature type="active site" description="Proton acceptor" evidence="1">
    <location>
        <position position="184"/>
    </location>
</feature>
<feature type="binding site" evidence="1">
    <location>
        <position position="81"/>
    </location>
    <ligand>
        <name>S-adenosyl-L-methionine</name>
        <dbReference type="ChEBI" id="CHEBI:59789"/>
    </ligand>
</feature>
<feature type="binding site" evidence="1">
    <location>
        <position position="83"/>
    </location>
    <ligand>
        <name>S-adenosyl-L-methionine</name>
        <dbReference type="ChEBI" id="CHEBI:59789"/>
    </ligand>
</feature>
<feature type="binding site" evidence="1">
    <location>
        <position position="104"/>
    </location>
    <ligand>
        <name>S-adenosyl-L-methionine</name>
        <dbReference type="ChEBI" id="CHEBI:59789"/>
    </ligand>
</feature>
<feature type="binding site" evidence="1">
    <location>
        <position position="120"/>
    </location>
    <ligand>
        <name>S-adenosyl-L-methionine</name>
        <dbReference type="ChEBI" id="CHEBI:59789"/>
    </ligand>
</feature>
<feature type="binding site" evidence="1">
    <location>
        <position position="144"/>
    </location>
    <ligand>
        <name>S-adenosyl-L-methionine</name>
        <dbReference type="ChEBI" id="CHEBI:59789"/>
    </ligand>
</feature>
<keyword id="KW-0963">Cytoplasm</keyword>
<keyword id="KW-0489">Methyltransferase</keyword>
<keyword id="KW-1185">Reference proteome</keyword>
<keyword id="KW-0698">rRNA processing</keyword>
<keyword id="KW-0949">S-adenosyl-L-methionine</keyword>
<keyword id="KW-0808">Transferase</keyword>
<reference key="1">
    <citation type="journal article" date="2001" name="Science">
        <title>The genome of the natural genetic engineer Agrobacterium tumefaciens C58.</title>
        <authorList>
            <person name="Wood D.W."/>
            <person name="Setubal J.C."/>
            <person name="Kaul R."/>
            <person name="Monks D.E."/>
            <person name="Kitajima J.P."/>
            <person name="Okura V.K."/>
            <person name="Zhou Y."/>
            <person name="Chen L."/>
            <person name="Wood G.E."/>
            <person name="Almeida N.F. Jr."/>
            <person name="Woo L."/>
            <person name="Chen Y."/>
            <person name="Paulsen I.T."/>
            <person name="Eisen J.A."/>
            <person name="Karp P.D."/>
            <person name="Bovee D. Sr."/>
            <person name="Chapman P."/>
            <person name="Clendenning J."/>
            <person name="Deatherage G."/>
            <person name="Gillet W."/>
            <person name="Grant C."/>
            <person name="Kutyavin T."/>
            <person name="Levy R."/>
            <person name="Li M.-J."/>
            <person name="McClelland E."/>
            <person name="Palmieri A."/>
            <person name="Raymond C."/>
            <person name="Rouse G."/>
            <person name="Saenphimmachak C."/>
            <person name="Wu Z."/>
            <person name="Romero P."/>
            <person name="Gordon D."/>
            <person name="Zhang S."/>
            <person name="Yoo H."/>
            <person name="Tao Y."/>
            <person name="Biddle P."/>
            <person name="Jung M."/>
            <person name="Krespan W."/>
            <person name="Perry M."/>
            <person name="Gordon-Kamm B."/>
            <person name="Liao L."/>
            <person name="Kim S."/>
            <person name="Hendrick C."/>
            <person name="Zhao Z.-Y."/>
            <person name="Dolan M."/>
            <person name="Chumley F."/>
            <person name="Tingey S.V."/>
            <person name="Tomb J.-F."/>
            <person name="Gordon M.P."/>
            <person name="Olson M.V."/>
            <person name="Nester E.W."/>
        </authorList>
    </citation>
    <scope>NUCLEOTIDE SEQUENCE [LARGE SCALE GENOMIC DNA]</scope>
    <source>
        <strain>C58 / ATCC 33970</strain>
    </source>
</reference>
<reference key="2">
    <citation type="journal article" date="2001" name="Science">
        <title>Genome sequence of the plant pathogen and biotechnology agent Agrobacterium tumefaciens C58.</title>
        <authorList>
            <person name="Goodner B."/>
            <person name="Hinkle G."/>
            <person name="Gattung S."/>
            <person name="Miller N."/>
            <person name="Blanchard M."/>
            <person name="Qurollo B."/>
            <person name="Goldman B.S."/>
            <person name="Cao Y."/>
            <person name="Askenazi M."/>
            <person name="Halling C."/>
            <person name="Mullin L."/>
            <person name="Houmiel K."/>
            <person name="Gordon J."/>
            <person name="Vaudin M."/>
            <person name="Iartchouk O."/>
            <person name="Epp A."/>
            <person name="Liu F."/>
            <person name="Wollam C."/>
            <person name="Allinger M."/>
            <person name="Doughty D."/>
            <person name="Scott C."/>
            <person name="Lappas C."/>
            <person name="Markelz B."/>
            <person name="Flanagan C."/>
            <person name="Crowell C."/>
            <person name="Gurson J."/>
            <person name="Lomo C."/>
            <person name="Sear C."/>
            <person name="Strub G."/>
            <person name="Cielo C."/>
            <person name="Slater S."/>
        </authorList>
    </citation>
    <scope>NUCLEOTIDE SEQUENCE [LARGE SCALE GENOMIC DNA]</scope>
    <source>
        <strain>C58 / ATCC 33970</strain>
    </source>
</reference>